<organism>
    <name type="scientific">Mus musculus</name>
    <name type="common">Mouse</name>
    <dbReference type="NCBI Taxonomy" id="10090"/>
    <lineage>
        <taxon>Eukaryota</taxon>
        <taxon>Metazoa</taxon>
        <taxon>Chordata</taxon>
        <taxon>Craniata</taxon>
        <taxon>Vertebrata</taxon>
        <taxon>Euteleostomi</taxon>
        <taxon>Mammalia</taxon>
        <taxon>Eutheria</taxon>
        <taxon>Euarchontoglires</taxon>
        <taxon>Glires</taxon>
        <taxon>Rodentia</taxon>
        <taxon>Myomorpha</taxon>
        <taxon>Muroidea</taxon>
        <taxon>Muridae</taxon>
        <taxon>Murinae</taxon>
        <taxon>Mus</taxon>
        <taxon>Mus</taxon>
    </lineage>
</organism>
<feature type="signal peptide" evidence="2">
    <location>
        <begin position="1"/>
        <end position="39"/>
    </location>
</feature>
<feature type="propeptide" id="PRO_0000028821" evidence="1">
    <location>
        <begin position="40"/>
        <end position="124"/>
    </location>
</feature>
<feature type="chain" id="PRO_0000028822" description="Matrix metalloproteinase-17">
    <location>
        <begin position="125"/>
        <end position="558"/>
    </location>
</feature>
<feature type="propeptide" id="PRO_0000028823" description="Removed in mature form" evidence="2">
    <location>
        <begin position="559"/>
        <end position="578"/>
    </location>
</feature>
<feature type="repeat" description="Hemopexin 1">
    <location>
        <begin position="333"/>
        <end position="382"/>
    </location>
</feature>
<feature type="repeat" description="Hemopexin 2">
    <location>
        <begin position="386"/>
        <end position="432"/>
    </location>
</feature>
<feature type="repeat" description="Hemopexin 3">
    <location>
        <begin position="436"/>
        <end position="479"/>
    </location>
</feature>
<feature type="repeat" description="Hemopexin 4">
    <location>
        <begin position="480"/>
        <end position="527"/>
    </location>
</feature>
<feature type="region of interest" description="Disordered" evidence="4">
    <location>
        <begin position="1"/>
        <end position="22"/>
    </location>
</feature>
<feature type="region of interest" description="Disordered" evidence="4">
    <location>
        <begin position="107"/>
        <end position="133"/>
    </location>
</feature>
<feature type="region of interest" description="Disordered" evidence="4">
    <location>
        <begin position="301"/>
        <end position="334"/>
    </location>
</feature>
<feature type="short sequence motif" description="Cysteine switch" evidence="1">
    <location>
        <begin position="107"/>
        <end position="114"/>
    </location>
</feature>
<feature type="compositionally biased region" description="Pro residues" evidence="4">
    <location>
        <begin position="11"/>
        <end position="22"/>
    </location>
</feature>
<feature type="active site">
    <location>
        <position position="248"/>
    </location>
</feature>
<feature type="binding site" description="in inhibited form" evidence="1">
    <location>
        <position position="109"/>
    </location>
    <ligand>
        <name>Zn(2+)</name>
        <dbReference type="ChEBI" id="CHEBI:29105"/>
        <note>catalytic</note>
    </ligand>
</feature>
<feature type="binding site" evidence="3">
    <location>
        <position position="247"/>
    </location>
    <ligand>
        <name>Zn(2+)</name>
        <dbReference type="ChEBI" id="CHEBI:29105"/>
        <note>catalytic</note>
    </ligand>
</feature>
<feature type="binding site" evidence="3">
    <location>
        <position position="251"/>
    </location>
    <ligand>
        <name>Zn(2+)</name>
        <dbReference type="ChEBI" id="CHEBI:29105"/>
        <note>catalytic</note>
    </ligand>
</feature>
<feature type="binding site" evidence="3">
    <location>
        <position position="257"/>
    </location>
    <ligand>
        <name>Zn(2+)</name>
        <dbReference type="ChEBI" id="CHEBI:29105"/>
        <note>catalytic</note>
    </ligand>
</feature>
<feature type="lipid moiety-binding region" description="GPI-anchor amidated serine" evidence="2">
    <location>
        <position position="558"/>
    </location>
</feature>
<feature type="glycosylation site" description="N-linked (GlcNAc...) asparagine" evidence="2">
    <location>
        <position position="136"/>
    </location>
</feature>
<feature type="glycosylation site" description="N-linked (GlcNAc...) asparagine" evidence="2">
    <location>
        <position position="322"/>
    </location>
</feature>
<feature type="disulfide bond" evidence="1">
    <location>
        <begin position="336"/>
        <end position="527"/>
    </location>
</feature>
<feature type="mutagenesis site" description="Loss of activity." evidence="5">
    <original>E</original>
    <variation>A</variation>
    <location>
        <position position="248"/>
    </location>
</feature>
<feature type="sequence conflict" description="In Ref. 3; CAB92315." evidence="7" ref="3">
    <original>A</original>
    <variation>G</variation>
    <location>
        <position position="45"/>
    </location>
</feature>
<feature type="sequence conflict" description="In Ref. 1; BAA82708." evidence="7" ref="1">
    <original>L</original>
    <variation>V</variation>
    <location>
        <position position="277"/>
    </location>
</feature>
<comment type="function">
    <text evidence="6">Endopeptidase that degrades various components of the extracellular matrix, such as fibrin. May be involved in the activation of membrane-bound precursors of growth factors or inflammatory mediators, such as tumor necrosis factor-alpha. May also be involved in tumoral process. Not obvious if able to proteolytically activate progelatinase A. Does not hydrolyze collagen types I, II, III, IV and V, gelatin, fibronectin, laminin, decorin nor alpha1-antitrypsin.</text>
</comment>
<comment type="cofactor">
    <cofactor evidence="1">
        <name>Zn(2+)</name>
        <dbReference type="ChEBI" id="CHEBI:29105"/>
    </cofactor>
    <text evidence="1">Binds 1 zinc ion per subunit.</text>
</comment>
<comment type="cofactor">
    <cofactor evidence="1">
        <name>Ca(2+)</name>
        <dbReference type="ChEBI" id="CHEBI:29108"/>
    </cofactor>
</comment>
<comment type="subcellular location">
    <subcellularLocation>
        <location>Cell membrane</location>
        <topology>Lipid-anchor</topology>
        <topology>GPI-anchor</topology>
        <orientation>Extracellular side</orientation>
    </subcellularLocation>
    <subcellularLocation>
        <location>Secreted</location>
        <location>Extracellular space</location>
        <location>Extracellular matrix</location>
    </subcellularLocation>
</comment>
<comment type="tissue specificity">
    <text>Expressed by monocytes and macrophages.</text>
</comment>
<comment type="domain">
    <text>The conserved cysteine present in the cysteine-switch motif binds the catalytic zinc ion, thus inhibiting the enzyme. The dissociation of the cysteine from the zinc ion upon the activation-peptide release activates the enzyme.</text>
</comment>
<comment type="PTM">
    <text evidence="1">The precursor is cleaved by a furin endopeptidase.</text>
</comment>
<comment type="similarity">
    <text evidence="7">Belongs to the peptidase M10A family.</text>
</comment>
<proteinExistence type="evidence at protein level"/>
<keyword id="KW-0106">Calcium</keyword>
<keyword id="KW-1003">Cell membrane</keyword>
<keyword id="KW-0165">Cleavage on pair of basic residues</keyword>
<keyword id="KW-1015">Disulfide bond</keyword>
<keyword id="KW-0272">Extracellular matrix</keyword>
<keyword id="KW-0325">Glycoprotein</keyword>
<keyword id="KW-0336">GPI-anchor</keyword>
<keyword id="KW-0378">Hydrolase</keyword>
<keyword id="KW-0449">Lipoprotein</keyword>
<keyword id="KW-0472">Membrane</keyword>
<keyword id="KW-0479">Metal-binding</keyword>
<keyword id="KW-0482">Metalloprotease</keyword>
<keyword id="KW-0645">Protease</keyword>
<keyword id="KW-1185">Reference proteome</keyword>
<keyword id="KW-0677">Repeat</keyword>
<keyword id="KW-0964">Secreted</keyword>
<keyword id="KW-0732">Signal</keyword>
<keyword id="KW-0862">Zinc</keyword>
<keyword id="KW-0865">Zymogen</keyword>
<accession>Q9R0S3</accession>
<accession>Q80UM9</accession>
<dbReference type="EC" id="3.4.24.-"/>
<dbReference type="EMBL" id="AB021224">
    <property type="protein sequence ID" value="BAA82708.2"/>
    <property type="molecule type" value="mRNA"/>
</dbReference>
<dbReference type="EMBL" id="AJ010731">
    <property type="protein sequence ID" value="CAB92315.1"/>
    <property type="molecule type" value="mRNA"/>
</dbReference>
<dbReference type="EMBL" id="CH466529">
    <property type="protein sequence ID" value="EDL19513.1"/>
    <property type="molecule type" value="Genomic_DNA"/>
</dbReference>
<dbReference type="EMBL" id="BC051917">
    <property type="protein sequence ID" value="AAH51917.1"/>
    <property type="molecule type" value="mRNA"/>
</dbReference>
<dbReference type="CCDS" id="CCDS19695.1"/>
<dbReference type="RefSeq" id="NP_035976.3">
    <property type="nucleotide sequence ID" value="NM_011846.5"/>
</dbReference>
<dbReference type="SMR" id="Q9R0S3"/>
<dbReference type="FunCoup" id="Q9R0S3">
    <property type="interactions" value="305"/>
</dbReference>
<dbReference type="STRING" id="10090.ENSMUSP00000031390"/>
<dbReference type="MEROPS" id="M10.017"/>
<dbReference type="GlyCosmos" id="Q9R0S3">
    <property type="glycosylation" value="2 sites, No reported glycans"/>
</dbReference>
<dbReference type="GlyGen" id="Q9R0S3">
    <property type="glycosylation" value="2 sites, 2 N-linked glycans (2 sites)"/>
</dbReference>
<dbReference type="iPTMnet" id="Q9R0S3"/>
<dbReference type="PhosphoSitePlus" id="Q9R0S3"/>
<dbReference type="REPRODUCTION-2DPAGE" id="Q9R0S3"/>
<dbReference type="CPTAC" id="non-CPTAC-3927"/>
<dbReference type="PaxDb" id="10090-ENSMUSP00000031390"/>
<dbReference type="PeptideAtlas" id="Q9R0S3"/>
<dbReference type="ProteomicsDB" id="291475"/>
<dbReference type="Antibodypedia" id="31995">
    <property type="antibodies" value="314 antibodies from 31 providers"/>
</dbReference>
<dbReference type="DNASU" id="23948"/>
<dbReference type="Ensembl" id="ENSMUST00000031390.10">
    <property type="protein sequence ID" value="ENSMUSP00000031390.9"/>
    <property type="gene ID" value="ENSMUSG00000029436.10"/>
</dbReference>
<dbReference type="GeneID" id="23948"/>
<dbReference type="KEGG" id="mmu:23948"/>
<dbReference type="UCSC" id="uc008zsy.1">
    <property type="organism name" value="mouse"/>
</dbReference>
<dbReference type="AGR" id="MGI:1346076"/>
<dbReference type="CTD" id="4326"/>
<dbReference type="MGI" id="MGI:1346076">
    <property type="gene designation" value="Mmp17"/>
</dbReference>
<dbReference type="VEuPathDB" id="HostDB:ENSMUSG00000029436"/>
<dbReference type="eggNOG" id="KOG1565">
    <property type="taxonomic scope" value="Eukaryota"/>
</dbReference>
<dbReference type="GeneTree" id="ENSGT00940000158699"/>
<dbReference type="HOGENOM" id="CLU_015489_8_2_1"/>
<dbReference type="InParanoid" id="Q9R0S3"/>
<dbReference type="OMA" id="WLVCGDP"/>
<dbReference type="OrthoDB" id="406838at2759"/>
<dbReference type="PhylomeDB" id="Q9R0S3"/>
<dbReference type="TreeFam" id="TF315428"/>
<dbReference type="Reactome" id="R-MMU-1592389">
    <property type="pathway name" value="Activation of Matrix Metalloproteinases"/>
</dbReference>
<dbReference type="BioGRID-ORCS" id="23948">
    <property type="hits" value="2 hits in 76 CRISPR screens"/>
</dbReference>
<dbReference type="ChiTaRS" id="Mmp17">
    <property type="organism name" value="mouse"/>
</dbReference>
<dbReference type="PRO" id="PR:Q9R0S3"/>
<dbReference type="Proteomes" id="UP000000589">
    <property type="component" value="Chromosome 5"/>
</dbReference>
<dbReference type="RNAct" id="Q9R0S3">
    <property type="molecule type" value="protein"/>
</dbReference>
<dbReference type="Bgee" id="ENSMUSG00000029436">
    <property type="expression patterns" value="Expressed in primary motor cortex and 207 other cell types or tissues"/>
</dbReference>
<dbReference type="GO" id="GO:0031012">
    <property type="term" value="C:extracellular matrix"/>
    <property type="evidence" value="ECO:0007669"/>
    <property type="project" value="InterPro"/>
</dbReference>
<dbReference type="GO" id="GO:0005576">
    <property type="term" value="C:extracellular region"/>
    <property type="evidence" value="ECO:0007669"/>
    <property type="project" value="UniProtKB-KW"/>
</dbReference>
<dbReference type="GO" id="GO:0005886">
    <property type="term" value="C:plasma membrane"/>
    <property type="evidence" value="ECO:0007669"/>
    <property type="project" value="UniProtKB-SubCell"/>
</dbReference>
<dbReference type="GO" id="GO:0098552">
    <property type="term" value="C:side of membrane"/>
    <property type="evidence" value="ECO:0007669"/>
    <property type="project" value="UniProtKB-KW"/>
</dbReference>
<dbReference type="GO" id="GO:0004222">
    <property type="term" value="F:metalloendopeptidase activity"/>
    <property type="evidence" value="ECO:0007669"/>
    <property type="project" value="InterPro"/>
</dbReference>
<dbReference type="GO" id="GO:0008270">
    <property type="term" value="F:zinc ion binding"/>
    <property type="evidence" value="ECO:0007669"/>
    <property type="project" value="InterPro"/>
</dbReference>
<dbReference type="GO" id="GO:0042756">
    <property type="term" value="P:drinking behavior"/>
    <property type="evidence" value="ECO:0000315"/>
    <property type="project" value="MGI"/>
</dbReference>
<dbReference type="GO" id="GO:0001822">
    <property type="term" value="P:kidney development"/>
    <property type="evidence" value="ECO:0000315"/>
    <property type="project" value="MGI"/>
</dbReference>
<dbReference type="GO" id="GO:0006508">
    <property type="term" value="P:proteolysis"/>
    <property type="evidence" value="ECO:0007669"/>
    <property type="project" value="UniProtKB-KW"/>
</dbReference>
<dbReference type="CDD" id="cd00094">
    <property type="entry name" value="HX"/>
    <property type="match status" value="1"/>
</dbReference>
<dbReference type="CDD" id="cd04278">
    <property type="entry name" value="ZnMc_MMP"/>
    <property type="match status" value="1"/>
</dbReference>
<dbReference type="FunFam" id="2.110.10.10:FF:000003">
    <property type="entry name" value="Matrix metallopeptidase 17"/>
    <property type="match status" value="1"/>
</dbReference>
<dbReference type="FunFam" id="3.40.390.10:FF:000016">
    <property type="entry name" value="Matrix metallopeptidase 17"/>
    <property type="match status" value="1"/>
</dbReference>
<dbReference type="Gene3D" id="3.40.390.10">
    <property type="entry name" value="Collagenase (Catalytic Domain)"/>
    <property type="match status" value="1"/>
</dbReference>
<dbReference type="Gene3D" id="2.110.10.10">
    <property type="entry name" value="Hemopexin-like domain"/>
    <property type="match status" value="1"/>
</dbReference>
<dbReference type="InterPro" id="IPR000585">
    <property type="entry name" value="Hemopexin-like_dom"/>
</dbReference>
<dbReference type="InterPro" id="IPR036375">
    <property type="entry name" value="Hemopexin-like_dom_sf"/>
</dbReference>
<dbReference type="InterPro" id="IPR018487">
    <property type="entry name" value="Hemopexin-like_repeat"/>
</dbReference>
<dbReference type="InterPro" id="IPR033739">
    <property type="entry name" value="M10A_MMP"/>
</dbReference>
<dbReference type="InterPro" id="IPR024079">
    <property type="entry name" value="MetalloPept_cat_dom_sf"/>
</dbReference>
<dbReference type="InterPro" id="IPR001818">
    <property type="entry name" value="Pept_M10_metallopeptidase"/>
</dbReference>
<dbReference type="InterPro" id="IPR021190">
    <property type="entry name" value="Pept_M10A"/>
</dbReference>
<dbReference type="InterPro" id="IPR006026">
    <property type="entry name" value="Peptidase_Metallo"/>
</dbReference>
<dbReference type="InterPro" id="IPR002477">
    <property type="entry name" value="Peptidoglycan-bd-like"/>
</dbReference>
<dbReference type="InterPro" id="IPR036365">
    <property type="entry name" value="PGBD-like_sf"/>
</dbReference>
<dbReference type="PANTHER" id="PTHR10201">
    <property type="entry name" value="MATRIX METALLOPROTEINASE"/>
    <property type="match status" value="1"/>
</dbReference>
<dbReference type="PANTHER" id="PTHR10201:SF21">
    <property type="entry name" value="MATRIX METALLOPROTEINASE-17"/>
    <property type="match status" value="1"/>
</dbReference>
<dbReference type="Pfam" id="PF00045">
    <property type="entry name" value="Hemopexin"/>
    <property type="match status" value="4"/>
</dbReference>
<dbReference type="Pfam" id="PF00413">
    <property type="entry name" value="Peptidase_M10"/>
    <property type="match status" value="1"/>
</dbReference>
<dbReference type="Pfam" id="PF01471">
    <property type="entry name" value="PG_binding_1"/>
    <property type="match status" value="1"/>
</dbReference>
<dbReference type="PIRSF" id="PIRSF001191">
    <property type="entry name" value="Peptidase_M10A_matrix"/>
    <property type="match status" value="1"/>
</dbReference>
<dbReference type="PRINTS" id="PR00138">
    <property type="entry name" value="MATRIXIN"/>
</dbReference>
<dbReference type="SMART" id="SM00120">
    <property type="entry name" value="HX"/>
    <property type="match status" value="4"/>
</dbReference>
<dbReference type="SMART" id="SM00235">
    <property type="entry name" value="ZnMc"/>
    <property type="match status" value="1"/>
</dbReference>
<dbReference type="SUPFAM" id="SSF50923">
    <property type="entry name" value="Hemopexin-like domain"/>
    <property type="match status" value="1"/>
</dbReference>
<dbReference type="SUPFAM" id="SSF55486">
    <property type="entry name" value="Metalloproteases ('zincins'), catalytic domain"/>
    <property type="match status" value="1"/>
</dbReference>
<dbReference type="SUPFAM" id="SSF47090">
    <property type="entry name" value="PGBD-like"/>
    <property type="match status" value="1"/>
</dbReference>
<dbReference type="PROSITE" id="PS51642">
    <property type="entry name" value="HEMOPEXIN_2"/>
    <property type="match status" value="4"/>
</dbReference>
<dbReference type="PROSITE" id="PS00142">
    <property type="entry name" value="ZINC_PROTEASE"/>
    <property type="match status" value="1"/>
</dbReference>
<name>MMP17_MOUSE</name>
<sequence length="578" mass="64333">MGRRPRGPGSPRGPGPPRPGPGLPPLLLVLALAAHGGCAAPAPRAEDLSLGVEWLSRFGYLPPADPASGQLQTQEELSKAITAMQQFGGLETTGILDEATLALMKTPRCSLPDLPPGAQSRRKRQTPPPTKWSKRNLSWRVRTFPRDSPLGRDTVRALMYYALKVWSDITPLNFHEVAGNAADIQIDFSKADHNDGYPFDGPGGTVAHAFFPGDHHTAGDTHFDDDEPWTFRSSDAHGMDLFAVAVHEFGHAIGLSHVAAPSSIMQPYYQGPVGDPLRYGLPYEDRVRVWQLYGVRESVSPTAQLDTPEPEEPPLLPEPPNNRSSTPPQKDVPHRCTAHFDAVAQIRGEAFFFKGKYFWRLTRDRHLVSLQPAQMHRFWRGLPLHLDSVDAVYERTSDHKIVFFKGDRYWVFKDNNVEEGYPRPVSDFSLPPGGIDAVFSWAHNDRTYFFKDQLYWRYDDHTRRMDPGYPAQGPLWRGVPSMLDDAMRWSDGASYFFRGQEYWKVLDGELEAAPGYPQSTARDWLVCGEPLADAEDVGPGPQGRSGAQDGLAVCSCTSDAHRLALPSLLLLTPLLWGL</sequence>
<protein>
    <recommendedName>
        <fullName>Matrix metalloproteinase-17</fullName>
        <shortName>MMP-17</shortName>
        <ecNumber>3.4.24.-</ecNumber>
    </recommendedName>
    <alternativeName>
        <fullName>Membrane-type matrix metalloproteinase 4</fullName>
        <shortName>MT-MMP 4</shortName>
        <shortName>MTMMP4</shortName>
    </alternativeName>
    <alternativeName>
        <fullName>Membrane-type-4 matrix metalloproteinase</fullName>
        <shortName>MT4-MMP</shortName>
        <shortName>MT4MMP</shortName>
    </alternativeName>
</protein>
<gene>
    <name type="primary">Mmp17</name>
    <name type="synonym">Mt4mmp</name>
</gene>
<reference key="1">
    <citation type="journal article" date="1999" name="FEBS Lett.">
        <title>Human membrane type-4 matrix metalloproteinase (MT4-MMP) is encoded by a novel major transcript: isolation of complementary DNA clones for human and mouse mt4-mmp transcripts.</title>
        <authorList>
            <person name="Kajita M."/>
            <person name="Kinoh H."/>
            <person name="Ito N."/>
            <person name="Takamura A."/>
            <person name="Itoh Y."/>
            <person name="Okada A."/>
            <person name="Sato H."/>
            <person name="Seiki M."/>
        </authorList>
    </citation>
    <scope>NUCLEOTIDE SEQUENCE [MRNA]</scope>
    <source>
        <tissue>Embryonic brain</tissue>
    </source>
</reference>
<reference key="2">
    <citation type="submission" date="2002-06" db="EMBL/GenBank/DDBJ databases">
        <authorList>
            <person name="Seiki M."/>
        </authorList>
    </citation>
    <scope>SEQUENCE REVISION TO C-TERMINUS</scope>
</reference>
<reference key="3">
    <citation type="journal article" date="2000" name="J. Biol. Chem.">
        <title>Membrane type 4 matrix metalloproteinase (MMP17) has tumor necrosis factor-alpha convertase activity but does not activate pro-MMP2.</title>
        <authorList>
            <person name="English W.R."/>
            <person name="Puente X.S."/>
            <person name="Freije J.M.P."/>
            <person name="Knaeuper V."/>
            <person name="Amour A."/>
            <person name="Merryweather A."/>
            <person name="Lopez-Otin C."/>
            <person name="Murphy G."/>
        </authorList>
    </citation>
    <scope>NUCLEOTIDE SEQUENCE [MRNA]</scope>
    <scope>FUNCTION</scope>
    <source>
        <tissue>Brain</tissue>
    </source>
</reference>
<reference key="4">
    <citation type="submission" date="2005-07" db="EMBL/GenBank/DDBJ databases">
        <authorList>
            <person name="Mural R.J."/>
            <person name="Adams M.D."/>
            <person name="Myers E.W."/>
            <person name="Smith H.O."/>
            <person name="Venter J.C."/>
        </authorList>
    </citation>
    <scope>NUCLEOTIDE SEQUENCE [LARGE SCALE GENOMIC DNA]</scope>
</reference>
<reference key="5">
    <citation type="journal article" date="2004" name="Genome Res.">
        <title>The status, quality, and expansion of the NIH full-length cDNA project: the Mammalian Gene Collection (MGC).</title>
        <authorList>
            <consortium name="The MGC Project Team"/>
        </authorList>
    </citation>
    <scope>NUCLEOTIDE SEQUENCE [LARGE SCALE MRNA]</scope>
    <source>
        <strain>C57BL/6J</strain>
        <tissue>Embryonic brain</tissue>
    </source>
</reference>
<reference key="6">
    <citation type="journal article" date="1999" name="J. Biol. Chem.">
        <title>Membrane type 4 matrix metalloproteinase (MT4-MMP, MMP-17) is a glycosylphosphatidylinositol-anchored proteinase.</title>
        <authorList>
            <person name="Itoh Y."/>
            <person name="Kajita M."/>
            <person name="Kinoh H."/>
            <person name="Mori H."/>
            <person name="Okada A."/>
            <person name="Seiki M."/>
        </authorList>
    </citation>
    <scope>GPI-ANCHOR</scope>
    <scope>MUTAGENESIS OF GLU-248</scope>
</reference>
<evidence type="ECO:0000250" key="1"/>
<evidence type="ECO:0000255" key="2"/>
<evidence type="ECO:0000255" key="3">
    <source>
        <dbReference type="PROSITE-ProRule" id="PRU10095"/>
    </source>
</evidence>
<evidence type="ECO:0000256" key="4">
    <source>
        <dbReference type="SAM" id="MobiDB-lite"/>
    </source>
</evidence>
<evidence type="ECO:0000269" key="5">
    <source>
    </source>
</evidence>
<evidence type="ECO:0000269" key="6">
    <source>
    </source>
</evidence>
<evidence type="ECO:0000305" key="7"/>